<comment type="function">
    <text evidence="1">Catalyzes the hydrolytic cleavage of the carbon-nitrogen bond in imidazolone-5-propanoate to yield N-formimidoyl-L-glutamate. It is the third step in the universal histidine degradation pathway.</text>
</comment>
<comment type="catalytic activity">
    <reaction evidence="1">
        <text>4-imidazolone-5-propanoate + H2O = N-formimidoyl-L-glutamate</text>
        <dbReference type="Rhea" id="RHEA:23660"/>
        <dbReference type="ChEBI" id="CHEBI:15377"/>
        <dbReference type="ChEBI" id="CHEBI:58928"/>
        <dbReference type="ChEBI" id="CHEBI:77893"/>
        <dbReference type="EC" id="3.5.2.7"/>
    </reaction>
</comment>
<comment type="cofactor">
    <cofactor evidence="1">
        <name>Zn(2+)</name>
        <dbReference type="ChEBI" id="CHEBI:29105"/>
    </cofactor>
    <cofactor evidence="1">
        <name>Fe(3+)</name>
        <dbReference type="ChEBI" id="CHEBI:29034"/>
    </cofactor>
    <text evidence="1">Binds 1 zinc or iron ion per subunit.</text>
</comment>
<comment type="pathway">
    <text evidence="1">Amino-acid degradation; L-histidine degradation into L-glutamate; N-formimidoyl-L-glutamate from L-histidine: step 3/3.</text>
</comment>
<comment type="subcellular location">
    <subcellularLocation>
        <location evidence="1">Cytoplasm</location>
    </subcellularLocation>
</comment>
<comment type="similarity">
    <text evidence="1">Belongs to the metallo-dependent hydrolases superfamily. HutI family.</text>
</comment>
<gene>
    <name evidence="1" type="primary">hutI</name>
    <name type="ordered locus">BDI_3646</name>
</gene>
<feature type="chain" id="PRO_0000306477" description="Imidazolonepropionase">
    <location>
        <begin position="1"/>
        <end position="416"/>
    </location>
</feature>
<feature type="binding site" evidence="1">
    <location>
        <position position="82"/>
    </location>
    <ligand>
        <name>Fe(3+)</name>
        <dbReference type="ChEBI" id="CHEBI:29034"/>
    </ligand>
</feature>
<feature type="binding site" evidence="1">
    <location>
        <position position="82"/>
    </location>
    <ligand>
        <name>Zn(2+)</name>
        <dbReference type="ChEBI" id="CHEBI:29105"/>
    </ligand>
</feature>
<feature type="binding site" evidence="1">
    <location>
        <position position="84"/>
    </location>
    <ligand>
        <name>Fe(3+)</name>
        <dbReference type="ChEBI" id="CHEBI:29034"/>
    </ligand>
</feature>
<feature type="binding site" evidence="1">
    <location>
        <position position="84"/>
    </location>
    <ligand>
        <name>Zn(2+)</name>
        <dbReference type="ChEBI" id="CHEBI:29105"/>
    </ligand>
</feature>
<feature type="binding site" evidence="1">
    <location>
        <position position="91"/>
    </location>
    <ligand>
        <name>4-imidazolone-5-propanoate</name>
        <dbReference type="ChEBI" id="CHEBI:77893"/>
    </ligand>
</feature>
<feature type="binding site" evidence="1">
    <location>
        <position position="154"/>
    </location>
    <ligand>
        <name>4-imidazolone-5-propanoate</name>
        <dbReference type="ChEBI" id="CHEBI:77893"/>
    </ligand>
</feature>
<feature type="binding site" evidence="1">
    <location>
        <position position="154"/>
    </location>
    <ligand>
        <name>N-formimidoyl-L-glutamate</name>
        <dbReference type="ChEBI" id="CHEBI:58928"/>
    </ligand>
</feature>
<feature type="binding site" evidence="1">
    <location>
        <position position="187"/>
    </location>
    <ligand>
        <name>4-imidazolone-5-propanoate</name>
        <dbReference type="ChEBI" id="CHEBI:77893"/>
    </ligand>
</feature>
<feature type="binding site" evidence="1">
    <location>
        <position position="252"/>
    </location>
    <ligand>
        <name>Fe(3+)</name>
        <dbReference type="ChEBI" id="CHEBI:29034"/>
    </ligand>
</feature>
<feature type="binding site" evidence="1">
    <location>
        <position position="252"/>
    </location>
    <ligand>
        <name>Zn(2+)</name>
        <dbReference type="ChEBI" id="CHEBI:29105"/>
    </ligand>
</feature>
<feature type="binding site" evidence="1">
    <location>
        <position position="255"/>
    </location>
    <ligand>
        <name>4-imidazolone-5-propanoate</name>
        <dbReference type="ChEBI" id="CHEBI:77893"/>
    </ligand>
</feature>
<feature type="binding site" evidence="1">
    <location>
        <position position="326"/>
    </location>
    <ligand>
        <name>Fe(3+)</name>
        <dbReference type="ChEBI" id="CHEBI:29034"/>
    </ligand>
</feature>
<feature type="binding site" evidence="1">
    <location>
        <position position="326"/>
    </location>
    <ligand>
        <name>Zn(2+)</name>
        <dbReference type="ChEBI" id="CHEBI:29105"/>
    </ligand>
</feature>
<feature type="binding site" evidence="1">
    <location>
        <position position="328"/>
    </location>
    <ligand>
        <name>N-formimidoyl-L-glutamate</name>
        <dbReference type="ChEBI" id="CHEBI:58928"/>
    </ligand>
</feature>
<feature type="binding site" evidence="1">
    <location>
        <position position="330"/>
    </location>
    <ligand>
        <name>N-formimidoyl-L-glutamate</name>
        <dbReference type="ChEBI" id="CHEBI:58928"/>
    </ligand>
</feature>
<feature type="binding site" evidence="1">
    <location>
        <position position="331"/>
    </location>
    <ligand>
        <name>4-imidazolone-5-propanoate</name>
        <dbReference type="ChEBI" id="CHEBI:77893"/>
    </ligand>
</feature>
<proteinExistence type="inferred from homology"/>
<reference key="1">
    <citation type="journal article" date="2007" name="PLoS Biol.">
        <title>Evolution of symbiotic bacteria in the distal human intestine.</title>
        <authorList>
            <person name="Xu J."/>
            <person name="Mahowald M.A."/>
            <person name="Ley R.E."/>
            <person name="Lozupone C.A."/>
            <person name="Hamady M."/>
            <person name="Martens E.C."/>
            <person name="Henrissat B."/>
            <person name="Coutinho P.M."/>
            <person name="Minx P."/>
            <person name="Latreille P."/>
            <person name="Cordum H."/>
            <person name="Van Brunt A."/>
            <person name="Kim K."/>
            <person name="Fulton R.S."/>
            <person name="Fulton L.A."/>
            <person name="Clifton S.W."/>
            <person name="Wilson R.K."/>
            <person name="Knight R.D."/>
            <person name="Gordon J.I."/>
        </authorList>
    </citation>
    <scope>NUCLEOTIDE SEQUENCE [LARGE SCALE GENOMIC DNA]</scope>
    <source>
        <strain>ATCC 8503 / DSM 20701 / CIP 104284 / JCM 5825 / NCTC 11152</strain>
    </source>
</reference>
<accession>A6LI30</accession>
<protein>
    <recommendedName>
        <fullName evidence="1">Imidazolonepropionase</fullName>
        <ecNumber evidence="1">3.5.2.7</ecNumber>
    </recommendedName>
    <alternativeName>
        <fullName evidence="1">Imidazolone-5-propionate hydrolase</fullName>
    </alternativeName>
</protein>
<organism>
    <name type="scientific">Parabacteroides distasonis (strain ATCC 8503 / DSM 20701 / CIP 104284 / JCM 5825 / NCTC 11152)</name>
    <dbReference type="NCBI Taxonomy" id="435591"/>
    <lineage>
        <taxon>Bacteria</taxon>
        <taxon>Pseudomonadati</taxon>
        <taxon>Bacteroidota</taxon>
        <taxon>Bacteroidia</taxon>
        <taxon>Bacteroidales</taxon>
        <taxon>Tannerellaceae</taxon>
        <taxon>Parabacteroides</taxon>
    </lineage>
</organism>
<evidence type="ECO:0000255" key="1">
    <source>
        <dbReference type="HAMAP-Rule" id="MF_00372"/>
    </source>
</evidence>
<dbReference type="EC" id="3.5.2.7" evidence="1"/>
<dbReference type="EMBL" id="CP000140">
    <property type="protein sequence ID" value="ABR45344.1"/>
    <property type="molecule type" value="Genomic_DNA"/>
</dbReference>
<dbReference type="RefSeq" id="WP_005859151.1">
    <property type="nucleotide sequence ID" value="NC_009615.1"/>
</dbReference>
<dbReference type="SMR" id="A6LI30"/>
<dbReference type="STRING" id="435591.BDI_3646"/>
<dbReference type="PaxDb" id="435591-BDI_3646"/>
<dbReference type="GeneID" id="93523717"/>
<dbReference type="KEGG" id="pdi:BDI_3646"/>
<dbReference type="eggNOG" id="COG1228">
    <property type="taxonomic scope" value="Bacteria"/>
</dbReference>
<dbReference type="HOGENOM" id="CLU_041647_0_1_10"/>
<dbReference type="BioCyc" id="PDIS435591:G1G5A-3739-MONOMER"/>
<dbReference type="UniPathway" id="UPA00379">
    <property type="reaction ID" value="UER00551"/>
</dbReference>
<dbReference type="Proteomes" id="UP000000566">
    <property type="component" value="Chromosome"/>
</dbReference>
<dbReference type="GO" id="GO:0005737">
    <property type="term" value="C:cytoplasm"/>
    <property type="evidence" value="ECO:0007669"/>
    <property type="project" value="UniProtKB-SubCell"/>
</dbReference>
<dbReference type="GO" id="GO:0050480">
    <property type="term" value="F:imidazolonepropionase activity"/>
    <property type="evidence" value="ECO:0007669"/>
    <property type="project" value="UniProtKB-UniRule"/>
</dbReference>
<dbReference type="GO" id="GO:0005506">
    <property type="term" value="F:iron ion binding"/>
    <property type="evidence" value="ECO:0007669"/>
    <property type="project" value="UniProtKB-UniRule"/>
</dbReference>
<dbReference type="GO" id="GO:0008270">
    <property type="term" value="F:zinc ion binding"/>
    <property type="evidence" value="ECO:0007669"/>
    <property type="project" value="UniProtKB-UniRule"/>
</dbReference>
<dbReference type="GO" id="GO:0019556">
    <property type="term" value="P:L-histidine catabolic process to glutamate and formamide"/>
    <property type="evidence" value="ECO:0007669"/>
    <property type="project" value="UniProtKB-UniPathway"/>
</dbReference>
<dbReference type="GO" id="GO:0019557">
    <property type="term" value="P:L-histidine catabolic process to glutamate and formate"/>
    <property type="evidence" value="ECO:0007669"/>
    <property type="project" value="UniProtKB-UniPathway"/>
</dbReference>
<dbReference type="CDD" id="cd01296">
    <property type="entry name" value="Imidazolone-5PH"/>
    <property type="match status" value="1"/>
</dbReference>
<dbReference type="FunFam" id="3.20.20.140:FF:000007">
    <property type="entry name" value="Imidazolonepropionase"/>
    <property type="match status" value="1"/>
</dbReference>
<dbReference type="Gene3D" id="3.20.20.140">
    <property type="entry name" value="Metal-dependent hydrolases"/>
    <property type="match status" value="1"/>
</dbReference>
<dbReference type="Gene3D" id="2.30.40.10">
    <property type="entry name" value="Urease, subunit C, domain 1"/>
    <property type="match status" value="1"/>
</dbReference>
<dbReference type="HAMAP" id="MF_00372">
    <property type="entry name" value="HutI"/>
    <property type="match status" value="1"/>
</dbReference>
<dbReference type="InterPro" id="IPR006680">
    <property type="entry name" value="Amidohydro-rel"/>
</dbReference>
<dbReference type="InterPro" id="IPR005920">
    <property type="entry name" value="HutI"/>
</dbReference>
<dbReference type="InterPro" id="IPR011059">
    <property type="entry name" value="Metal-dep_hydrolase_composite"/>
</dbReference>
<dbReference type="InterPro" id="IPR032466">
    <property type="entry name" value="Metal_Hydrolase"/>
</dbReference>
<dbReference type="NCBIfam" id="TIGR01224">
    <property type="entry name" value="hutI"/>
    <property type="match status" value="1"/>
</dbReference>
<dbReference type="PANTHER" id="PTHR42752">
    <property type="entry name" value="IMIDAZOLONEPROPIONASE"/>
    <property type="match status" value="1"/>
</dbReference>
<dbReference type="PANTHER" id="PTHR42752:SF1">
    <property type="entry name" value="IMIDAZOLONEPROPIONASE-RELATED"/>
    <property type="match status" value="1"/>
</dbReference>
<dbReference type="Pfam" id="PF01979">
    <property type="entry name" value="Amidohydro_1"/>
    <property type="match status" value="1"/>
</dbReference>
<dbReference type="SUPFAM" id="SSF51338">
    <property type="entry name" value="Composite domain of metallo-dependent hydrolases"/>
    <property type="match status" value="2"/>
</dbReference>
<dbReference type="SUPFAM" id="SSF51556">
    <property type="entry name" value="Metallo-dependent hydrolases"/>
    <property type="match status" value="1"/>
</dbReference>
<name>HUTI_PARD8</name>
<keyword id="KW-0963">Cytoplasm</keyword>
<keyword id="KW-0369">Histidine metabolism</keyword>
<keyword id="KW-0378">Hydrolase</keyword>
<keyword id="KW-0408">Iron</keyword>
<keyword id="KW-0479">Metal-binding</keyword>
<keyword id="KW-1185">Reference proteome</keyword>
<keyword id="KW-0862">Zinc</keyword>
<sequence>MENSKILIRNAAQIVTCHGDKARRGAEMSDLGVIEDGAVAMSDGVITHVGPTEEVLRNIHAEDYLEIRAENQAVLPGFVDSHTHFIFGGYREEEFSWRLRGDSYMSIMERGGGIVNTMKATRESDFDTLWDRGEERLDELFSMGVTTVEGKSGYGLDLQTELVQLRVMSDLNESHPMDVVSTFLGAHAVPPEFAGRTDDYVDYMIEEVLPAIRAEHTVTFCDVFCEKGVFSLEQSERLLRAARHHRFKLKMHADEIVPFGGAELAASLKCVSADHLLHISDTGIKRLARAGVVATLLPLTAFSLNEPYAPARKMIDAGCAVALASDLNPGSCFSASIPMMIALACIYMKMTPEEAVTALTINGAAAVGRASEIGSISVGKRADVILLKYPSYKFLPYHVGMNLVDTVIKDGELYMM</sequence>